<dbReference type="EC" id="3.1.1.-" evidence="6"/>
<dbReference type="EMBL" id="AAYY01000002">
    <property type="protein sequence ID" value="EDP44991.1"/>
    <property type="molecule type" value="Genomic_DNA"/>
</dbReference>
<dbReference type="RefSeq" id="XP_001732205.1">
    <property type="nucleotide sequence ID" value="XM_001732153.1"/>
</dbReference>
<dbReference type="SMR" id="A8PUY3"/>
<dbReference type="GeneID" id="5856511"/>
<dbReference type="KEGG" id="mgl:MGL_0798"/>
<dbReference type="VEuPathDB" id="FungiDB:MGL_0798"/>
<dbReference type="InParanoid" id="A8PUY3"/>
<dbReference type="OMA" id="SVWINCP"/>
<dbReference type="OrthoDB" id="426718at2759"/>
<dbReference type="Proteomes" id="UP000008837">
    <property type="component" value="Unassembled WGS sequence"/>
</dbReference>
<dbReference type="GO" id="GO:0005576">
    <property type="term" value="C:extracellular region"/>
    <property type="evidence" value="ECO:0007669"/>
    <property type="project" value="UniProtKB-SubCell"/>
</dbReference>
<dbReference type="GO" id="GO:0016787">
    <property type="term" value="F:hydrolase activity"/>
    <property type="evidence" value="ECO:0007669"/>
    <property type="project" value="UniProtKB-KW"/>
</dbReference>
<dbReference type="GO" id="GO:0016042">
    <property type="term" value="P:lipid catabolic process"/>
    <property type="evidence" value="ECO:0007669"/>
    <property type="project" value="UniProtKB-KW"/>
</dbReference>
<dbReference type="CDD" id="cd00519">
    <property type="entry name" value="Lipase_3"/>
    <property type="match status" value="1"/>
</dbReference>
<dbReference type="Gene3D" id="3.40.50.1820">
    <property type="entry name" value="alpha/beta hydrolase"/>
    <property type="match status" value="1"/>
</dbReference>
<dbReference type="InterPro" id="IPR029058">
    <property type="entry name" value="AB_hydrolase_fold"/>
</dbReference>
<dbReference type="InterPro" id="IPR002921">
    <property type="entry name" value="Fungal_lipase-type"/>
</dbReference>
<dbReference type="InterPro" id="IPR051218">
    <property type="entry name" value="Sec_MonoDiacylglyc_Lipase"/>
</dbReference>
<dbReference type="PANTHER" id="PTHR45856">
    <property type="entry name" value="ALPHA/BETA-HYDROLASES SUPERFAMILY PROTEIN"/>
    <property type="match status" value="1"/>
</dbReference>
<dbReference type="PANTHER" id="PTHR45856:SF24">
    <property type="entry name" value="FUNGAL LIPASE-LIKE DOMAIN-CONTAINING PROTEIN"/>
    <property type="match status" value="1"/>
</dbReference>
<dbReference type="Pfam" id="PF01764">
    <property type="entry name" value="Lipase_3"/>
    <property type="match status" value="1"/>
</dbReference>
<dbReference type="SUPFAM" id="SSF53474">
    <property type="entry name" value="alpha/beta-Hydrolases"/>
    <property type="match status" value="1"/>
</dbReference>
<dbReference type="PROSITE" id="PS00120">
    <property type="entry name" value="LIPASE_SER"/>
    <property type="match status" value="1"/>
</dbReference>
<gene>
    <name evidence="7" type="primary">MDL3</name>
    <name type="ORF">MGL_0798</name>
</gene>
<proteinExistence type="evidence at protein level"/>
<reference key="1">
    <citation type="journal article" date="2007" name="Proc. Natl. Acad. Sci. U.S.A.">
        <title>Dandruff-associated Malassezia genomes reveal convergent and divergent virulence traits shared with plant and human fungal pathogens.</title>
        <authorList>
            <person name="Xu J."/>
            <person name="Saunders C.W."/>
            <person name="Hu P."/>
            <person name="Grant R.A."/>
            <person name="Boekhout T."/>
            <person name="Kuramae E.E."/>
            <person name="Kronstad J.W."/>
            <person name="DeAngelis Y.M."/>
            <person name="Reeder N.L."/>
            <person name="Johnstone K.R."/>
            <person name="Leland M."/>
            <person name="Fieno A.M."/>
            <person name="Begley W.M."/>
            <person name="Sun Y."/>
            <person name="Lacey M.P."/>
            <person name="Chaudhary T."/>
            <person name="Keough T."/>
            <person name="Chu L."/>
            <person name="Sears R."/>
            <person name="Yuan B."/>
            <person name="Dawson T.L. Jr."/>
        </authorList>
    </citation>
    <scope>NUCLEOTIDE SEQUENCE [LARGE SCALE GENOMIC DNA]</scope>
    <scope>IDENTIFICATION</scope>
    <scope>FUNCTION</scope>
    <source>
        <strain>ATCC MYA-4612 / CBS 7966</strain>
    </source>
</reference>
<reference key="2">
    <citation type="journal article" date="2016" name="Microbiology">
        <title>Secreted lipases from Malassezia globosa: recombinant expression and determination of their substrate specificities.</title>
        <authorList>
            <person name="Sommer B."/>
            <person name="Overy D.P."/>
            <person name="Haltli B."/>
            <person name="Kerr R.G."/>
        </authorList>
    </citation>
    <scope>FUNCTION</scope>
    <scope>CATALYTIC ACTIVITY</scope>
    <scope>SUBSTRATE SPECIFICITY</scope>
</reference>
<name>MDL3_MALGO</name>
<protein>
    <recommendedName>
        <fullName evidence="7">Secreted mono- and diacylglycerol lipase MDL3</fullName>
        <ecNumber evidence="6">3.1.1.-</ecNumber>
    </recommendedName>
</protein>
<feature type="signal peptide" evidence="2">
    <location>
        <begin position="1"/>
        <end position="19"/>
    </location>
</feature>
<feature type="chain" id="PRO_5002727878" description="Secreted mono- and diacylglycerol lipase MDL3">
    <location>
        <begin position="20"/>
        <end position="304"/>
    </location>
</feature>
<feature type="active site" description="Nucleophile" evidence="4">
    <location>
        <position position="171"/>
    </location>
</feature>
<feature type="active site" evidence="1">
    <location>
        <position position="228"/>
    </location>
</feature>
<feature type="active site" evidence="1">
    <location>
        <position position="281"/>
    </location>
</feature>
<feature type="glycosylation site" description="N-linked (GlcNAc...) asparagine" evidence="3">
    <location>
        <position position="161"/>
    </location>
</feature>
<feature type="disulfide bond" evidence="1">
    <location>
        <begin position="55"/>
        <end position="297"/>
    </location>
</feature>
<evidence type="ECO:0000250" key="1">
    <source>
        <dbReference type="UniProtKB" id="A8PUY1"/>
    </source>
</evidence>
<evidence type="ECO:0000255" key="2"/>
<evidence type="ECO:0000255" key="3">
    <source>
        <dbReference type="PROSITE-ProRule" id="PRU00498"/>
    </source>
</evidence>
<evidence type="ECO:0000255" key="4">
    <source>
        <dbReference type="PROSITE-ProRule" id="PRU10037"/>
    </source>
</evidence>
<evidence type="ECO:0000269" key="5">
    <source>
    </source>
</evidence>
<evidence type="ECO:0000269" key="6">
    <source>
    </source>
</evidence>
<evidence type="ECO:0000303" key="7">
    <source>
    </source>
</evidence>
<evidence type="ECO:0000305" key="8"/>
<accession>A8PUY3</accession>
<comment type="function">
    <text evidence="5 6">Secreted lipase involved in Dandruff and seborrheic dermatitis (D/SD) probably via lipase-mediated breakdown of sebaceous lipids and release of irritating free fatty acids (PubMed:18000048). Shows activity against monoglyceride and diglyceride substrates, but not triglyceride substrates and does not exhibit regio-selective production of diacylglycerols (PubMed:27130210). Hydrolyzes distearin, dilinolein, dipalmitoylglycerol and dipalmitolein (PubMed:27130210). Cleaves oleic acid from 1,2 isomers of diolein on both the 1 and the 2 position of the glycerol backbone, resulting mainly in free fatty acids but no monoolein is detected (PubMed:27130210). Shows activity on monoolein and liberates mostly free fatty acids, but can also perform the reverse reaction and produce diolein (PubMed:27130210).</text>
</comment>
<comment type="catalytic activity">
    <reaction evidence="6">
        <text>a monoacylglycerol + H2O = glycerol + a fatty acid + H(+)</text>
        <dbReference type="Rhea" id="RHEA:15245"/>
        <dbReference type="ChEBI" id="CHEBI:15377"/>
        <dbReference type="ChEBI" id="CHEBI:15378"/>
        <dbReference type="ChEBI" id="CHEBI:17408"/>
        <dbReference type="ChEBI" id="CHEBI:17754"/>
        <dbReference type="ChEBI" id="CHEBI:28868"/>
    </reaction>
</comment>
<comment type="catalytic activity">
    <reaction evidence="6">
        <text>a diacylglycerol + H2O = a monoacylglycerol + a fatty acid + H(+)</text>
        <dbReference type="Rhea" id="RHEA:32731"/>
        <dbReference type="ChEBI" id="CHEBI:15377"/>
        <dbReference type="ChEBI" id="CHEBI:15378"/>
        <dbReference type="ChEBI" id="CHEBI:17408"/>
        <dbReference type="ChEBI" id="CHEBI:18035"/>
        <dbReference type="ChEBI" id="CHEBI:28868"/>
    </reaction>
</comment>
<comment type="subcellular location">
    <subcellularLocation>
        <location evidence="5">Secreted</location>
    </subcellularLocation>
    <subcellularLocation>
        <location evidence="5">Secreted</location>
        <location evidence="5">Cell wall</location>
    </subcellularLocation>
</comment>
<comment type="similarity">
    <text evidence="8">Belongs to the AB hydrolase superfamily. Lipase family. Class 3 subfamily.</text>
</comment>
<keyword id="KW-0134">Cell wall</keyword>
<keyword id="KW-1015">Disulfide bond</keyword>
<keyword id="KW-0325">Glycoprotein</keyword>
<keyword id="KW-0378">Hydrolase</keyword>
<keyword id="KW-0442">Lipid degradation</keyword>
<keyword id="KW-0443">Lipid metabolism</keyword>
<keyword id="KW-1185">Reference proteome</keyword>
<keyword id="KW-0964">Secreted</keyword>
<keyword id="KW-0732">Signal</keyword>
<keyword id="KW-0843">Virulence</keyword>
<sequence>MIVGPVISLLLSYFVLVSGASIEPRAAKSTDQPVDVPYDIDEFTQAASLAQQAYCTKGAHDYGLKIGDSTLLWTTGDGSLKQRVNVHHSESLGIVVAFQGTNSISPFSDFHDIQFRPVDPDARYKQYYPKGTKVMNGFQNAYTDDVDTVFKHVEKFKQEKNETRVTVTGHSLGAAMGLLGSMDIALRMNGGLHKAYLFGLPRVGNPTFANFVDKTIGDKLHWVVNGGDWVPLVPPRPFGYQHPSNYIWIYPSNSDNWRLYPGQENVHGMLTVPQDVGTSDHLGVYFHSKIGGRSGPCPSQLGGF</sequence>
<organism>
    <name type="scientific">Malassezia globosa (strain ATCC MYA-4612 / CBS 7966)</name>
    <name type="common">Dandruff-associated fungus</name>
    <dbReference type="NCBI Taxonomy" id="425265"/>
    <lineage>
        <taxon>Eukaryota</taxon>
        <taxon>Fungi</taxon>
        <taxon>Dikarya</taxon>
        <taxon>Basidiomycota</taxon>
        <taxon>Ustilaginomycotina</taxon>
        <taxon>Malasseziomycetes</taxon>
        <taxon>Malasseziales</taxon>
        <taxon>Malasseziaceae</taxon>
        <taxon>Malassezia</taxon>
    </lineage>
</organism>